<keyword id="KW-0067">ATP-binding</keyword>
<keyword id="KW-0093">Biotin biosynthesis</keyword>
<keyword id="KW-0963">Cytoplasm</keyword>
<keyword id="KW-0436">Ligase</keyword>
<keyword id="KW-0460">Magnesium</keyword>
<keyword id="KW-0479">Metal-binding</keyword>
<keyword id="KW-0547">Nucleotide-binding</keyword>
<sequence>MKRYFVTGTDTDCGKTFVTNQLVNYFSSSAAIKPIASGCEYSENQLVNSDALLHQQQNHLPLEVVNPWRFRLPVSPHLSARADGASIDVHKVADYCLNLQLNDIKKLFIEGAGGLMVPLNEQDTWLDFLKLTRIPVILVVGMKLGCINHTLLTQEVFEINKIKCQGWIANCLDQDMLMLDENISTLEAKLKYPLLARTNYGGKISDICLSSL</sequence>
<evidence type="ECO:0000255" key="1">
    <source>
        <dbReference type="HAMAP-Rule" id="MF_00336"/>
    </source>
</evidence>
<accession>Q5WWA0</accession>
<protein>
    <recommendedName>
        <fullName evidence="1">ATP-dependent dethiobiotin synthetase BioD</fullName>
        <ecNumber evidence="1">6.3.3.3</ecNumber>
    </recommendedName>
    <alternativeName>
        <fullName evidence="1">DTB synthetase</fullName>
        <shortName evidence="1">DTBS</shortName>
    </alternativeName>
    <alternativeName>
        <fullName evidence="1">Dethiobiotin synthase</fullName>
    </alternativeName>
</protein>
<dbReference type="EC" id="6.3.3.3" evidence="1"/>
<dbReference type="EMBL" id="CR628337">
    <property type="protein sequence ID" value="CAH15793.1"/>
    <property type="molecule type" value="Genomic_DNA"/>
</dbReference>
<dbReference type="RefSeq" id="WP_011215590.1">
    <property type="nucleotide sequence ID" value="NC_006369.1"/>
</dbReference>
<dbReference type="SMR" id="Q5WWA0"/>
<dbReference type="KEGG" id="lpf:lpl1553"/>
<dbReference type="LegioList" id="lpl1553"/>
<dbReference type="HOGENOM" id="CLU_072551_0_0_6"/>
<dbReference type="UniPathway" id="UPA00078">
    <property type="reaction ID" value="UER00161"/>
</dbReference>
<dbReference type="Proteomes" id="UP000002517">
    <property type="component" value="Chromosome"/>
</dbReference>
<dbReference type="GO" id="GO:0005829">
    <property type="term" value="C:cytosol"/>
    <property type="evidence" value="ECO:0007669"/>
    <property type="project" value="TreeGrafter"/>
</dbReference>
<dbReference type="GO" id="GO:0005524">
    <property type="term" value="F:ATP binding"/>
    <property type="evidence" value="ECO:0007669"/>
    <property type="project" value="UniProtKB-UniRule"/>
</dbReference>
<dbReference type="GO" id="GO:0004141">
    <property type="term" value="F:dethiobiotin synthase activity"/>
    <property type="evidence" value="ECO:0007669"/>
    <property type="project" value="UniProtKB-UniRule"/>
</dbReference>
<dbReference type="GO" id="GO:0000287">
    <property type="term" value="F:magnesium ion binding"/>
    <property type="evidence" value="ECO:0007669"/>
    <property type="project" value="UniProtKB-UniRule"/>
</dbReference>
<dbReference type="GO" id="GO:0009102">
    <property type="term" value="P:biotin biosynthetic process"/>
    <property type="evidence" value="ECO:0007669"/>
    <property type="project" value="UniProtKB-UniRule"/>
</dbReference>
<dbReference type="CDD" id="cd03109">
    <property type="entry name" value="DTBS"/>
    <property type="match status" value="1"/>
</dbReference>
<dbReference type="FunFam" id="3.40.50.300:FF:000292">
    <property type="entry name" value="ATP-dependent dethiobiotin synthetase BioD"/>
    <property type="match status" value="1"/>
</dbReference>
<dbReference type="Gene3D" id="3.40.50.300">
    <property type="entry name" value="P-loop containing nucleotide triphosphate hydrolases"/>
    <property type="match status" value="1"/>
</dbReference>
<dbReference type="HAMAP" id="MF_00336">
    <property type="entry name" value="BioD"/>
    <property type="match status" value="1"/>
</dbReference>
<dbReference type="InterPro" id="IPR004472">
    <property type="entry name" value="DTB_synth_BioD"/>
</dbReference>
<dbReference type="InterPro" id="IPR027417">
    <property type="entry name" value="P-loop_NTPase"/>
</dbReference>
<dbReference type="NCBIfam" id="TIGR00347">
    <property type="entry name" value="bioD"/>
    <property type="match status" value="1"/>
</dbReference>
<dbReference type="PANTHER" id="PTHR43210">
    <property type="entry name" value="DETHIOBIOTIN SYNTHETASE"/>
    <property type="match status" value="1"/>
</dbReference>
<dbReference type="PANTHER" id="PTHR43210:SF5">
    <property type="entry name" value="DETHIOBIOTIN SYNTHETASE"/>
    <property type="match status" value="1"/>
</dbReference>
<dbReference type="Pfam" id="PF13500">
    <property type="entry name" value="AAA_26"/>
    <property type="match status" value="1"/>
</dbReference>
<dbReference type="PIRSF" id="PIRSF006755">
    <property type="entry name" value="DTB_synth"/>
    <property type="match status" value="1"/>
</dbReference>
<dbReference type="SUPFAM" id="SSF52540">
    <property type="entry name" value="P-loop containing nucleoside triphosphate hydrolases"/>
    <property type="match status" value="1"/>
</dbReference>
<proteinExistence type="inferred from homology"/>
<reference key="1">
    <citation type="journal article" date="2004" name="Nat. Genet.">
        <title>Evidence in the Legionella pneumophila genome for exploitation of host cell functions and high genome plasticity.</title>
        <authorList>
            <person name="Cazalet C."/>
            <person name="Rusniok C."/>
            <person name="Brueggemann H."/>
            <person name="Zidane N."/>
            <person name="Magnier A."/>
            <person name="Ma L."/>
            <person name="Tichit M."/>
            <person name="Jarraud S."/>
            <person name="Bouchier C."/>
            <person name="Vandenesch F."/>
            <person name="Kunst F."/>
            <person name="Etienne J."/>
            <person name="Glaser P."/>
            <person name="Buchrieser C."/>
        </authorList>
    </citation>
    <scope>NUCLEOTIDE SEQUENCE [LARGE SCALE GENOMIC DNA]</scope>
    <source>
        <strain>Lens</strain>
    </source>
</reference>
<feature type="chain" id="PRO_0000302516" description="ATP-dependent dethiobiotin synthetase BioD">
    <location>
        <begin position="1"/>
        <end position="212"/>
    </location>
</feature>
<feature type="active site" evidence="1">
    <location>
        <position position="33"/>
    </location>
</feature>
<feature type="binding site" evidence="1">
    <location>
        <begin position="12"/>
        <end position="17"/>
    </location>
    <ligand>
        <name>ATP</name>
        <dbReference type="ChEBI" id="CHEBI:30616"/>
    </ligand>
</feature>
<feature type="binding site" evidence="1">
    <location>
        <position position="16"/>
    </location>
    <ligand>
        <name>Mg(2+)</name>
        <dbReference type="ChEBI" id="CHEBI:18420"/>
    </ligand>
</feature>
<feature type="binding site" evidence="1">
    <location>
        <position position="37"/>
    </location>
    <ligand>
        <name>substrate</name>
    </ligand>
</feature>
<feature type="binding site" evidence="1">
    <location>
        <position position="50"/>
    </location>
    <ligand>
        <name>ATP</name>
        <dbReference type="ChEBI" id="CHEBI:30616"/>
    </ligand>
</feature>
<feature type="binding site" evidence="1">
    <location>
        <position position="50"/>
    </location>
    <ligand>
        <name>Mg(2+)</name>
        <dbReference type="ChEBI" id="CHEBI:18420"/>
    </ligand>
</feature>
<feature type="binding site" evidence="1">
    <location>
        <begin position="110"/>
        <end position="113"/>
    </location>
    <ligand>
        <name>ATP</name>
        <dbReference type="ChEBI" id="CHEBI:30616"/>
    </ligand>
</feature>
<feature type="binding site" evidence="1">
    <location>
        <position position="110"/>
    </location>
    <ligand>
        <name>Mg(2+)</name>
        <dbReference type="ChEBI" id="CHEBI:18420"/>
    </ligand>
</feature>
<feature type="binding site" evidence="1">
    <location>
        <begin position="170"/>
        <end position="171"/>
    </location>
    <ligand>
        <name>ATP</name>
        <dbReference type="ChEBI" id="CHEBI:30616"/>
    </ligand>
</feature>
<gene>
    <name evidence="1" type="primary">bioD</name>
    <name type="ordered locus">lpl1553</name>
</gene>
<organism>
    <name type="scientific">Legionella pneumophila (strain Lens)</name>
    <dbReference type="NCBI Taxonomy" id="297245"/>
    <lineage>
        <taxon>Bacteria</taxon>
        <taxon>Pseudomonadati</taxon>
        <taxon>Pseudomonadota</taxon>
        <taxon>Gammaproteobacteria</taxon>
        <taxon>Legionellales</taxon>
        <taxon>Legionellaceae</taxon>
        <taxon>Legionella</taxon>
    </lineage>
</organism>
<comment type="function">
    <text evidence="1">Catalyzes a mechanistically unusual reaction, the ATP-dependent insertion of CO2 between the N7 and N8 nitrogen atoms of 7,8-diaminopelargonic acid (DAPA, also called 7,8-diammoniononanoate) to form a ureido ring.</text>
</comment>
<comment type="catalytic activity">
    <reaction evidence="1">
        <text>(7R,8S)-7,8-diammoniononanoate + CO2 + ATP = (4R,5S)-dethiobiotin + ADP + phosphate + 3 H(+)</text>
        <dbReference type="Rhea" id="RHEA:15805"/>
        <dbReference type="ChEBI" id="CHEBI:15378"/>
        <dbReference type="ChEBI" id="CHEBI:16526"/>
        <dbReference type="ChEBI" id="CHEBI:30616"/>
        <dbReference type="ChEBI" id="CHEBI:43474"/>
        <dbReference type="ChEBI" id="CHEBI:149469"/>
        <dbReference type="ChEBI" id="CHEBI:149473"/>
        <dbReference type="ChEBI" id="CHEBI:456216"/>
        <dbReference type="EC" id="6.3.3.3"/>
    </reaction>
</comment>
<comment type="cofactor">
    <cofactor evidence="1">
        <name>Mg(2+)</name>
        <dbReference type="ChEBI" id="CHEBI:18420"/>
    </cofactor>
</comment>
<comment type="pathway">
    <text evidence="1">Cofactor biosynthesis; biotin biosynthesis; biotin from 7,8-diaminononanoate: step 1/2.</text>
</comment>
<comment type="subunit">
    <text evidence="1">Homodimer.</text>
</comment>
<comment type="subcellular location">
    <subcellularLocation>
        <location evidence="1">Cytoplasm</location>
    </subcellularLocation>
</comment>
<comment type="similarity">
    <text evidence="1">Belongs to the dethiobiotin synthetase family.</text>
</comment>
<name>BIOD_LEGPL</name>